<dbReference type="PIR" id="S07204">
    <property type="entry name" value="S07204"/>
</dbReference>
<dbReference type="PIR" id="S07205">
    <property type="entry name" value="S07205"/>
</dbReference>
<dbReference type="GO" id="GO:0005576">
    <property type="term" value="C:extracellular region"/>
    <property type="evidence" value="ECO:0007669"/>
    <property type="project" value="UniProtKB-SubCell"/>
</dbReference>
<dbReference type="GO" id="GO:0006952">
    <property type="term" value="P:defense response"/>
    <property type="evidence" value="ECO:0007669"/>
    <property type="project" value="UniProtKB-KW"/>
</dbReference>
<dbReference type="GO" id="GO:0007218">
    <property type="term" value="P:neuropeptide signaling pathway"/>
    <property type="evidence" value="ECO:0007669"/>
    <property type="project" value="InterPro"/>
</dbReference>
<dbReference type="InterPro" id="IPR000874">
    <property type="entry name" value="Bombesin"/>
</dbReference>
<dbReference type="PROSITE" id="PS00257">
    <property type="entry name" value="BOMBESIN"/>
    <property type="match status" value="1"/>
</dbReference>
<feature type="peptide" id="PRO_0000043493" description="Litorin">
    <location>
        <begin position="1"/>
        <end position="9"/>
    </location>
</feature>
<feature type="modified residue" description="Pyrrolidone carboxylic acid" evidence="1">
    <location>
        <position position="1"/>
    </location>
</feature>
<feature type="modified residue" description="Methionine amide" evidence="1">
    <location>
        <position position="9"/>
    </location>
</feature>
<accession>P08945</accession>
<comment type="subcellular location">
    <subcellularLocation>
        <location>Secreted</location>
    </subcellularLocation>
</comment>
<comment type="tissue specificity">
    <text>Expressed by the skin glands.</text>
</comment>
<comment type="similarity">
    <text evidence="2">Belongs to the bombesin/neuromedin-B/ranatensin family.</text>
</comment>
<comment type="caution">
    <text evidence="2">PubMed:908397 reported the formation of a glutamate methyl ester from Gln-2. This is most probably an artifact of isolation.</text>
</comment>
<reference key="1">
    <citation type="journal article" date="1975" name="Experientia">
        <title>Aminoacid composition and sequence of litorin, a bombesin-like nonapeptide from the skin of the Australian leptodactylid frog Litoria aurea.</title>
        <authorList>
            <person name="Anastasi A."/>
            <person name="Erspamer V."/>
            <person name="Endean R."/>
        </authorList>
    </citation>
    <scope>PROTEIN SEQUENCE</scope>
    <scope>PYROGLUTAMATE FORMATION AT GLN-1</scope>
    <scope>AMIDATION AT MET-9</scope>
    <source>
        <tissue>Skin secretion</tissue>
    </source>
</reference>
<reference key="2">
    <citation type="journal article" date="1977" name="Experientia">
        <title>Glu(OMe)3-litorin, the second bombesin-like peptide occurring in methanol extracts of the skin of the Australian frog Litoria aurea.</title>
        <authorList>
            <person name="Anastasi A."/>
            <person name="Montecucchi P.C."/>
            <person name="Angelucci F."/>
            <person name="Erspamer V."/>
            <person name="Endean R."/>
        </authorList>
    </citation>
    <scope>PROTEIN SEQUENCE</scope>
    <source>
        <tissue>Skin secretion</tissue>
    </source>
</reference>
<keyword id="KW-0027">Amidation</keyword>
<keyword id="KW-0878">Amphibian defense peptide</keyword>
<keyword id="KW-0903">Direct protein sequencing</keyword>
<keyword id="KW-0873">Pyrrolidone carboxylic acid</keyword>
<keyword id="KW-0964">Secreted</keyword>
<evidence type="ECO:0000269" key="1">
    <source>
    </source>
</evidence>
<evidence type="ECO:0000305" key="2"/>
<name>LITO_RANAE</name>
<sequence length="9" mass="1103">QQWAVGHFM</sequence>
<organism>
    <name type="scientific">Ranoidea aurea</name>
    <name type="common">Green and golden bell frog</name>
    <name type="synonym">Litoria aurea</name>
    <dbReference type="NCBI Taxonomy" id="8371"/>
    <lineage>
        <taxon>Eukaryota</taxon>
        <taxon>Metazoa</taxon>
        <taxon>Chordata</taxon>
        <taxon>Craniata</taxon>
        <taxon>Vertebrata</taxon>
        <taxon>Euteleostomi</taxon>
        <taxon>Amphibia</taxon>
        <taxon>Batrachia</taxon>
        <taxon>Anura</taxon>
        <taxon>Neobatrachia</taxon>
        <taxon>Hyloidea</taxon>
        <taxon>Hylidae</taxon>
        <taxon>Pelodryadinae</taxon>
        <taxon>Ranoidea</taxon>
    </lineage>
</organism>
<proteinExistence type="evidence at protein level"/>
<protein>
    <recommendedName>
        <fullName>Litorin</fullName>
    </recommendedName>
</protein>